<sequence length="251" mass="27121">MRQIIIAGNWKMNTTLSEACTLVQGMKYELDQISGIQKIVCPPFISLAPVKTILDGSSIHLGAQNLFYEEKGAYTGEISPLMLQDICPYVIIGHSERRAYFGETGQVVNRKIKAALQAGIMPIVCVGEKLEENENGQTRQILETQMKEALAGINPSSIIIAYEPIWAIGTGKAATAAEANNTISYIRKVLGDIWGNTASRITPILYGGSVNEKNTAELLCQSDIDGALVGGASLKAESFVSICRQAADVRK</sequence>
<organism>
    <name type="scientific">Dehalococcoides mccartyi (strain ATCC BAA-2266 / KCTC 15142 / 195)</name>
    <name type="common">Dehalococcoides ethenogenes (strain 195)</name>
    <dbReference type="NCBI Taxonomy" id="243164"/>
    <lineage>
        <taxon>Bacteria</taxon>
        <taxon>Bacillati</taxon>
        <taxon>Chloroflexota</taxon>
        <taxon>Dehalococcoidia</taxon>
        <taxon>Dehalococcoidales</taxon>
        <taxon>Dehalococcoidaceae</taxon>
        <taxon>Dehalococcoides</taxon>
    </lineage>
</organism>
<reference key="1">
    <citation type="journal article" date="2005" name="Science">
        <title>Genome sequence of the PCE-dechlorinating bacterium Dehalococcoides ethenogenes.</title>
        <authorList>
            <person name="Seshadri R."/>
            <person name="Adrian L."/>
            <person name="Fouts D.E."/>
            <person name="Eisen J.A."/>
            <person name="Phillippy A.M."/>
            <person name="Methe B.A."/>
            <person name="Ward N.L."/>
            <person name="Nelson W.C."/>
            <person name="DeBoy R.T."/>
            <person name="Khouri H.M."/>
            <person name="Kolonay J.F."/>
            <person name="Dodson R.J."/>
            <person name="Daugherty S.C."/>
            <person name="Brinkac L.M."/>
            <person name="Sullivan S.A."/>
            <person name="Madupu R."/>
            <person name="Nelson K.E."/>
            <person name="Kang K.H."/>
            <person name="Impraim M."/>
            <person name="Tran K."/>
            <person name="Robinson J.M."/>
            <person name="Forberger H.A."/>
            <person name="Fraser C.M."/>
            <person name="Zinder S.H."/>
            <person name="Heidelberg J.F."/>
        </authorList>
    </citation>
    <scope>NUCLEOTIDE SEQUENCE [LARGE SCALE GENOMIC DNA]</scope>
    <source>
        <strain>ATCC BAA-2266 / KCTC 15142 / 195</strain>
    </source>
</reference>
<accession>Q3Z8H2</accession>
<dbReference type="EC" id="5.3.1.1" evidence="1"/>
<dbReference type="EMBL" id="CP000027">
    <property type="protein sequence ID" value="AAW39995.1"/>
    <property type="molecule type" value="Genomic_DNA"/>
</dbReference>
<dbReference type="RefSeq" id="WP_010936478.1">
    <property type="nucleotide sequence ID" value="NC_002936.3"/>
</dbReference>
<dbReference type="SMR" id="Q3Z8H2"/>
<dbReference type="FunCoup" id="Q3Z8H2">
    <property type="interactions" value="309"/>
</dbReference>
<dbReference type="STRING" id="243164.DET0742"/>
<dbReference type="GeneID" id="3229957"/>
<dbReference type="KEGG" id="det:DET0742"/>
<dbReference type="PATRIC" id="fig|243164.10.peg.710"/>
<dbReference type="eggNOG" id="COG0149">
    <property type="taxonomic scope" value="Bacteria"/>
</dbReference>
<dbReference type="HOGENOM" id="CLU_024251_2_3_0"/>
<dbReference type="InParanoid" id="Q3Z8H2"/>
<dbReference type="UniPathway" id="UPA00109">
    <property type="reaction ID" value="UER00189"/>
</dbReference>
<dbReference type="UniPathway" id="UPA00138"/>
<dbReference type="Proteomes" id="UP000008289">
    <property type="component" value="Chromosome"/>
</dbReference>
<dbReference type="GO" id="GO:0005829">
    <property type="term" value="C:cytosol"/>
    <property type="evidence" value="ECO:0007669"/>
    <property type="project" value="TreeGrafter"/>
</dbReference>
<dbReference type="GO" id="GO:0004807">
    <property type="term" value="F:triose-phosphate isomerase activity"/>
    <property type="evidence" value="ECO:0007669"/>
    <property type="project" value="UniProtKB-UniRule"/>
</dbReference>
<dbReference type="GO" id="GO:0006094">
    <property type="term" value="P:gluconeogenesis"/>
    <property type="evidence" value="ECO:0007669"/>
    <property type="project" value="UniProtKB-UniRule"/>
</dbReference>
<dbReference type="GO" id="GO:0046166">
    <property type="term" value="P:glyceraldehyde-3-phosphate biosynthetic process"/>
    <property type="evidence" value="ECO:0007669"/>
    <property type="project" value="TreeGrafter"/>
</dbReference>
<dbReference type="GO" id="GO:0019563">
    <property type="term" value="P:glycerol catabolic process"/>
    <property type="evidence" value="ECO:0007669"/>
    <property type="project" value="TreeGrafter"/>
</dbReference>
<dbReference type="GO" id="GO:0006096">
    <property type="term" value="P:glycolytic process"/>
    <property type="evidence" value="ECO:0007669"/>
    <property type="project" value="UniProtKB-UniRule"/>
</dbReference>
<dbReference type="CDD" id="cd00311">
    <property type="entry name" value="TIM"/>
    <property type="match status" value="1"/>
</dbReference>
<dbReference type="FunFam" id="3.20.20.70:FF:000016">
    <property type="entry name" value="Triosephosphate isomerase"/>
    <property type="match status" value="1"/>
</dbReference>
<dbReference type="Gene3D" id="3.20.20.70">
    <property type="entry name" value="Aldolase class I"/>
    <property type="match status" value="1"/>
</dbReference>
<dbReference type="HAMAP" id="MF_00147_B">
    <property type="entry name" value="TIM_B"/>
    <property type="match status" value="1"/>
</dbReference>
<dbReference type="InterPro" id="IPR013785">
    <property type="entry name" value="Aldolase_TIM"/>
</dbReference>
<dbReference type="InterPro" id="IPR035990">
    <property type="entry name" value="TIM_sf"/>
</dbReference>
<dbReference type="InterPro" id="IPR022896">
    <property type="entry name" value="TrioseP_Isoase_bac/euk"/>
</dbReference>
<dbReference type="InterPro" id="IPR000652">
    <property type="entry name" value="Triosephosphate_isomerase"/>
</dbReference>
<dbReference type="InterPro" id="IPR020861">
    <property type="entry name" value="Triosephosphate_isomerase_AS"/>
</dbReference>
<dbReference type="NCBIfam" id="TIGR00419">
    <property type="entry name" value="tim"/>
    <property type="match status" value="1"/>
</dbReference>
<dbReference type="PANTHER" id="PTHR21139">
    <property type="entry name" value="TRIOSEPHOSPHATE ISOMERASE"/>
    <property type="match status" value="1"/>
</dbReference>
<dbReference type="PANTHER" id="PTHR21139:SF42">
    <property type="entry name" value="TRIOSEPHOSPHATE ISOMERASE"/>
    <property type="match status" value="1"/>
</dbReference>
<dbReference type="Pfam" id="PF00121">
    <property type="entry name" value="TIM"/>
    <property type="match status" value="1"/>
</dbReference>
<dbReference type="SUPFAM" id="SSF51351">
    <property type="entry name" value="Triosephosphate isomerase (TIM)"/>
    <property type="match status" value="1"/>
</dbReference>
<dbReference type="PROSITE" id="PS00171">
    <property type="entry name" value="TIM_1"/>
    <property type="match status" value="1"/>
</dbReference>
<dbReference type="PROSITE" id="PS51440">
    <property type="entry name" value="TIM_2"/>
    <property type="match status" value="1"/>
</dbReference>
<feature type="chain" id="PRO_0000307457" description="Triosephosphate isomerase">
    <location>
        <begin position="1"/>
        <end position="251"/>
    </location>
</feature>
<feature type="active site" description="Electrophile" evidence="1">
    <location>
        <position position="94"/>
    </location>
</feature>
<feature type="active site" description="Proton acceptor" evidence="1">
    <location>
        <position position="163"/>
    </location>
</feature>
<feature type="binding site" evidence="1">
    <location>
        <begin position="9"/>
        <end position="11"/>
    </location>
    <ligand>
        <name>substrate</name>
    </ligand>
</feature>
<feature type="binding site" evidence="1">
    <location>
        <position position="169"/>
    </location>
    <ligand>
        <name>substrate</name>
    </ligand>
</feature>
<feature type="binding site" evidence="1">
    <location>
        <position position="209"/>
    </location>
    <ligand>
        <name>substrate</name>
    </ligand>
</feature>
<feature type="binding site" evidence="1">
    <location>
        <begin position="230"/>
        <end position="231"/>
    </location>
    <ligand>
        <name>substrate</name>
    </ligand>
</feature>
<proteinExistence type="inferred from homology"/>
<protein>
    <recommendedName>
        <fullName evidence="1">Triosephosphate isomerase</fullName>
        <shortName evidence="1">TIM</shortName>
        <shortName evidence="1">TPI</shortName>
        <ecNumber evidence="1">5.3.1.1</ecNumber>
    </recommendedName>
    <alternativeName>
        <fullName evidence="1">Triose-phosphate isomerase</fullName>
    </alternativeName>
</protein>
<comment type="function">
    <text evidence="1">Involved in the gluconeogenesis. Catalyzes stereospecifically the conversion of dihydroxyacetone phosphate (DHAP) to D-glyceraldehyde-3-phosphate (G3P).</text>
</comment>
<comment type="catalytic activity">
    <reaction evidence="1">
        <text>D-glyceraldehyde 3-phosphate = dihydroxyacetone phosphate</text>
        <dbReference type="Rhea" id="RHEA:18585"/>
        <dbReference type="ChEBI" id="CHEBI:57642"/>
        <dbReference type="ChEBI" id="CHEBI:59776"/>
        <dbReference type="EC" id="5.3.1.1"/>
    </reaction>
</comment>
<comment type="pathway">
    <text evidence="1">Carbohydrate biosynthesis; gluconeogenesis.</text>
</comment>
<comment type="pathway">
    <text evidence="1">Carbohydrate degradation; glycolysis; D-glyceraldehyde 3-phosphate from glycerone phosphate: step 1/1.</text>
</comment>
<comment type="subunit">
    <text evidence="1">Homodimer.</text>
</comment>
<comment type="subcellular location">
    <subcellularLocation>
        <location evidence="1">Cytoplasm</location>
    </subcellularLocation>
</comment>
<comment type="similarity">
    <text evidence="1">Belongs to the triosephosphate isomerase family.</text>
</comment>
<name>TPIS_DEHM1</name>
<gene>
    <name evidence="1" type="primary">tpiA</name>
    <name type="ordered locus">DET0742</name>
</gene>
<keyword id="KW-0963">Cytoplasm</keyword>
<keyword id="KW-0312">Gluconeogenesis</keyword>
<keyword id="KW-0324">Glycolysis</keyword>
<keyword id="KW-0413">Isomerase</keyword>
<evidence type="ECO:0000255" key="1">
    <source>
        <dbReference type="HAMAP-Rule" id="MF_00147"/>
    </source>
</evidence>